<evidence type="ECO:0000269" key="1">
    <source>
    </source>
</evidence>
<evidence type="ECO:0000269" key="2">
    <source>
    </source>
</evidence>
<evidence type="ECO:0000269" key="3">
    <source>
    </source>
</evidence>
<evidence type="ECO:0000269" key="4">
    <source>
    </source>
</evidence>
<evidence type="ECO:0000303" key="5">
    <source>
    </source>
</evidence>
<evidence type="ECO:0000305" key="6"/>
<evidence type="ECO:0000312" key="7">
    <source>
        <dbReference type="EMBL" id="CCP46364.1"/>
    </source>
</evidence>
<evidence type="ECO:0007744" key="8">
    <source>
        <dbReference type="PDB" id="4W78"/>
    </source>
</evidence>
<evidence type="ECO:0007744" key="9">
    <source>
        <dbReference type="PDB" id="4WNB"/>
    </source>
</evidence>
<comment type="function">
    <text evidence="1 2 4">Involved in cholesterol side chain degradation (PubMed:22045806, PubMed:25203216). Catalyzes the hydration of 3-oxo-4,17-pregnadiene-20-carboxyl-CoA (3-OPDC-CoA) to form 17-hydroxy-3-oxo-4-pregnene-20-carboxyl-CoA (17-HOPC-CoA), in the modified beta-oxidation pathway for cholesterol side chain degradation (PubMed:25203216, PubMed:31568719). Can also use octenoyl-CoA and decenoyl-CoA, with lower efficiency (PubMed:25203216).</text>
</comment>
<comment type="catalytic activity">
    <reaction evidence="2 4">
        <text>3-oxochola-4,17-dien-22-oyl-CoA + H2O = 17-hydroxy-3-oxochol-4-en-22-oyl-CoA</text>
        <dbReference type="Rhea" id="RHEA:46336"/>
        <dbReference type="ChEBI" id="CHEBI:15377"/>
        <dbReference type="ChEBI" id="CHEBI:86020"/>
        <dbReference type="ChEBI" id="CHEBI:86028"/>
    </reaction>
    <physiologicalReaction direction="left-to-right" evidence="2 4">
        <dbReference type="Rhea" id="RHEA:46337"/>
    </physiologicalReaction>
</comment>
<comment type="catalytic activity">
    <reaction evidence="2">
        <text>(2E)-octenoyl-CoA + H2O = 3-hydroxyoctanoyl-CoA</text>
        <dbReference type="Rhea" id="RHEA:46348"/>
        <dbReference type="ChEBI" id="CHEBI:15377"/>
        <dbReference type="ChEBI" id="CHEBI:62242"/>
        <dbReference type="ChEBI" id="CHEBI:86040"/>
    </reaction>
</comment>
<comment type="catalytic activity">
    <reaction evidence="2">
        <text>(2E)-decenoyl-CoA + H2O = 3-hydroxydecanoyl-CoA</text>
        <dbReference type="Rhea" id="RHEA:46352"/>
        <dbReference type="ChEBI" id="CHEBI:15377"/>
        <dbReference type="ChEBI" id="CHEBI:61406"/>
        <dbReference type="ChEBI" id="CHEBI:86041"/>
    </reaction>
</comment>
<comment type="activity regulation">
    <text evidence="3">In the absence of the Ltp2 aldolase, ChsH1/ChsH2 can hydrate only about 30% of the 3-OPDC-CoA substrate. Complete turnover requires the presence of Ltp2.</text>
</comment>
<comment type="pathway">
    <text evidence="1 2">Steroid metabolism; cholesterol degradation.</text>
</comment>
<comment type="subunit">
    <text evidence="2 3 4">Heterodimer composed of ChsH1 and ChsH2. Two heterodimers combine to form a heterotetramer (PubMed:25203216). The complex interacts with Ltp2 via the DUF35 C-terminal region of ChsH2 (PubMed:29109182, PubMed:31568719). The ChsH1-ChsH2-Ltp2 protein complex is composed of two protomers that form a heterohexameric structure through the Ltp2 dimerization interface (PubMed:31568719).</text>
</comment>
<comment type="domain">
    <text evidence="2 3">The DUF35 C-terminal region is not required for hydratase activity (PubMed:25203216). This region is involved in interaction with LtpA and is required for optimal LtpA aldolase activity (PubMed:29109182).</text>
</comment>
<comment type="similarity">
    <text evidence="6">Belongs to the thioester dehydratase family.</text>
</comment>
<dbReference type="EC" id="4.2.1.-" evidence="2 4"/>
<dbReference type="EMBL" id="AL123456">
    <property type="protein sequence ID" value="CCP46364.1"/>
    <property type="molecule type" value="Genomic_DNA"/>
</dbReference>
<dbReference type="RefSeq" id="NP_218059.1">
    <property type="nucleotide sequence ID" value="NC_000962.3"/>
</dbReference>
<dbReference type="RefSeq" id="WP_003419293.1">
    <property type="nucleotide sequence ID" value="NZ_NVQJ01000014.1"/>
</dbReference>
<dbReference type="PDB" id="4W78">
    <property type="method" value="X-ray"/>
    <property type="resolution" value="1.54 A"/>
    <property type="chains" value="A/C/E/G=3-180"/>
</dbReference>
<dbReference type="PDB" id="4WNB">
    <property type="method" value="X-ray"/>
    <property type="resolution" value="1.76 A"/>
    <property type="chains" value="A=1-187"/>
</dbReference>
<dbReference type="PDBsum" id="4W78"/>
<dbReference type="PDBsum" id="4WNB"/>
<dbReference type="SMR" id="I6YGF8"/>
<dbReference type="STRING" id="83332.Rv3542c"/>
<dbReference type="PaxDb" id="83332-Rv3542c"/>
<dbReference type="DNASU" id="888486"/>
<dbReference type="GeneID" id="888486"/>
<dbReference type="KEGG" id="mtu:Rv3542c"/>
<dbReference type="KEGG" id="mtv:RVBD_3542c"/>
<dbReference type="PATRIC" id="fig|83332.111.peg.3947"/>
<dbReference type="TubercuList" id="Rv3542c"/>
<dbReference type="eggNOG" id="COG1545">
    <property type="taxonomic scope" value="Bacteria"/>
</dbReference>
<dbReference type="InParanoid" id="I6YGF8"/>
<dbReference type="OrthoDB" id="4275032at2"/>
<dbReference type="BioCyc" id="MetaCyc:G185E-7819-MONOMER"/>
<dbReference type="UniPathway" id="UPA01058"/>
<dbReference type="Proteomes" id="UP000001584">
    <property type="component" value="Chromosome"/>
</dbReference>
<dbReference type="GO" id="GO:0016829">
    <property type="term" value="F:lyase activity"/>
    <property type="evidence" value="ECO:0007669"/>
    <property type="project" value="UniProtKB-KW"/>
</dbReference>
<dbReference type="GO" id="GO:0006707">
    <property type="term" value="P:cholesterol catabolic process"/>
    <property type="evidence" value="ECO:0007669"/>
    <property type="project" value="UniProtKB-UniPathway"/>
</dbReference>
<dbReference type="CDD" id="cd03441">
    <property type="entry name" value="R_hydratase_like"/>
    <property type="match status" value="1"/>
</dbReference>
<dbReference type="FunFam" id="3.10.129.10:FF:000097">
    <property type="entry name" value="DNA-binding protein"/>
    <property type="match status" value="1"/>
</dbReference>
<dbReference type="Gene3D" id="3.10.129.10">
    <property type="entry name" value="Hotdog Thioesterase"/>
    <property type="match status" value="1"/>
</dbReference>
<dbReference type="InterPro" id="IPR002878">
    <property type="entry name" value="ChsH2_C"/>
</dbReference>
<dbReference type="InterPro" id="IPR039569">
    <property type="entry name" value="FAS1-like_DH_region"/>
</dbReference>
<dbReference type="InterPro" id="IPR029069">
    <property type="entry name" value="HotDog_dom_sf"/>
</dbReference>
<dbReference type="InterPro" id="IPR012340">
    <property type="entry name" value="NA-bd_OB-fold"/>
</dbReference>
<dbReference type="PANTHER" id="PTHR42993">
    <property type="entry name" value="MAOC-LIKE DEHYDRATASE DOMAIN-CONTAINING PROTEIN"/>
    <property type="match status" value="1"/>
</dbReference>
<dbReference type="PANTHER" id="PTHR42993:SF1">
    <property type="entry name" value="MAOC-LIKE DEHYDRATASE DOMAIN-CONTAINING PROTEIN"/>
    <property type="match status" value="1"/>
</dbReference>
<dbReference type="Pfam" id="PF13452">
    <property type="entry name" value="FAS1_DH_region"/>
    <property type="match status" value="1"/>
</dbReference>
<dbReference type="Pfam" id="PF01796">
    <property type="entry name" value="OB_ChsH2_C"/>
    <property type="match status" value="1"/>
</dbReference>
<dbReference type="SUPFAM" id="SSF50249">
    <property type="entry name" value="Nucleic acid-binding proteins"/>
    <property type="match status" value="1"/>
</dbReference>
<dbReference type="SUPFAM" id="SSF54637">
    <property type="entry name" value="Thioesterase/thiol ester dehydrase-isomerase"/>
    <property type="match status" value="1"/>
</dbReference>
<keyword id="KW-0002">3D-structure</keyword>
<keyword id="KW-0153">Cholesterol metabolism</keyword>
<keyword id="KW-0443">Lipid metabolism</keyword>
<keyword id="KW-0456">Lyase</keyword>
<keyword id="KW-1185">Reference proteome</keyword>
<keyword id="KW-0753">Steroid metabolism</keyword>
<keyword id="KW-1207">Sterol metabolism</keyword>
<organism>
    <name type="scientific">Mycobacterium tuberculosis (strain ATCC 25618 / H37Rv)</name>
    <dbReference type="NCBI Taxonomy" id="83332"/>
    <lineage>
        <taxon>Bacteria</taxon>
        <taxon>Bacillati</taxon>
        <taxon>Actinomycetota</taxon>
        <taxon>Actinomycetes</taxon>
        <taxon>Mycobacteriales</taxon>
        <taxon>Mycobacteriaceae</taxon>
        <taxon>Mycobacterium</taxon>
        <taxon>Mycobacterium tuberculosis complex</taxon>
    </lineage>
</organism>
<protein>
    <recommendedName>
        <fullName evidence="6">3-oxo-4,17-pregnadiene-20-carboxyl-CoA hydratase alpha subunit</fullName>
        <ecNumber evidence="2 4">4.2.1.-</ecNumber>
    </recommendedName>
    <alternativeName>
        <fullName evidence="6">Enoyl-CoA hydratase alpha subunit</fullName>
    </alternativeName>
</protein>
<accession>I6YGF8</accession>
<name>CHSH2_MYCTU</name>
<feature type="chain" id="PRO_0000452241" description="3-oxo-4,17-pregnadiene-20-carboxyl-CoA hydratase alpha subunit">
    <location>
        <begin position="1"/>
        <end position="311"/>
    </location>
</feature>
<feature type="region of interest" description="DUF35" evidence="6">
    <location>
        <begin position="198"/>
        <end position="295"/>
    </location>
</feature>
<sequence length="311" mass="33972">MTGVSDIQEAVAQIKAAGPSKPRLARDPVNQPMINNWVEAIGDRNPIYVDDAAARAAGHPGIVAPPAMIQVWTMMGLGGVRPKDDPLGPIIKLFDDAGYIGVVATNCEQTYHRYLLPGEQVSISAELGDVVGPKQTALGEGWFINQHIVWQVGDEDVAEMNWRILKFKPAGSPSSVPDDLDPDAMMRPSSSRDTAFFWDGVKAHELRIQRLADGSLRHPPVPAVWQDKSVPINYVVSSGRGTVFSFVVHHAPKVPGRTVPFVIALVELEEGVRMLGELRGADPARVAIGMPVRATYIDFPDWSLYAWEPDE</sequence>
<gene>
    <name evidence="5" type="primary">chsH2</name>
    <name evidence="7" type="ordered locus">Rv3542c</name>
</gene>
<reference key="1">
    <citation type="journal article" date="1998" name="Nature">
        <title>Deciphering the biology of Mycobacterium tuberculosis from the complete genome sequence.</title>
        <authorList>
            <person name="Cole S.T."/>
            <person name="Brosch R."/>
            <person name="Parkhill J."/>
            <person name="Garnier T."/>
            <person name="Churcher C.M."/>
            <person name="Harris D.E."/>
            <person name="Gordon S.V."/>
            <person name="Eiglmeier K."/>
            <person name="Gas S."/>
            <person name="Barry C.E. III"/>
            <person name="Tekaia F."/>
            <person name="Badcock K."/>
            <person name="Basham D."/>
            <person name="Brown D."/>
            <person name="Chillingworth T."/>
            <person name="Connor R."/>
            <person name="Davies R.M."/>
            <person name="Devlin K."/>
            <person name="Feltwell T."/>
            <person name="Gentles S."/>
            <person name="Hamlin N."/>
            <person name="Holroyd S."/>
            <person name="Hornsby T."/>
            <person name="Jagels K."/>
            <person name="Krogh A."/>
            <person name="McLean J."/>
            <person name="Moule S."/>
            <person name="Murphy L.D."/>
            <person name="Oliver S."/>
            <person name="Osborne J."/>
            <person name="Quail M.A."/>
            <person name="Rajandream M.A."/>
            <person name="Rogers J."/>
            <person name="Rutter S."/>
            <person name="Seeger K."/>
            <person name="Skelton S."/>
            <person name="Squares S."/>
            <person name="Squares R."/>
            <person name="Sulston J.E."/>
            <person name="Taylor K."/>
            <person name="Whitehead S."/>
            <person name="Barrell B.G."/>
        </authorList>
    </citation>
    <scope>NUCLEOTIDE SEQUENCE [LARGE SCALE GENOMIC DNA]</scope>
    <source>
        <strain>ATCC 25618 / H37Rv</strain>
    </source>
</reference>
<reference key="2">
    <citation type="journal article" date="2011" name="Mol. Cell. Proteomics">
        <title>Proteogenomic analysis of Mycobacterium tuberculosis by high resolution mass spectrometry.</title>
        <authorList>
            <person name="Kelkar D.S."/>
            <person name="Kumar D."/>
            <person name="Kumar P."/>
            <person name="Balakrishnan L."/>
            <person name="Muthusamy B."/>
            <person name="Yadav A.K."/>
            <person name="Shrivastava P."/>
            <person name="Marimuthu A."/>
            <person name="Anand S."/>
            <person name="Sundaram H."/>
            <person name="Kingsbury R."/>
            <person name="Harsha H.C."/>
            <person name="Nair B."/>
            <person name="Prasad T.S."/>
            <person name="Chauhan D.S."/>
            <person name="Katoch K."/>
            <person name="Katoch V.M."/>
            <person name="Kumar P."/>
            <person name="Chaerkady R."/>
            <person name="Ramachandran S."/>
            <person name="Dash D."/>
            <person name="Pandey A."/>
        </authorList>
    </citation>
    <scope>IDENTIFICATION BY MASS SPECTROMETRY [LARGE SCALE ANALYSIS]</scope>
    <source>
        <strain>ATCC 25618 / H37Rv</strain>
    </source>
</reference>
<reference key="3">
    <citation type="journal article" date="2011" name="J. Biol. Chem.">
        <title>Pathway profiling in Mycobacterium tuberculosis: elucidation of cholesterol-derived catabolite and enzymes that catalyze its metabolism.</title>
        <authorList>
            <person name="Thomas S.T."/>
            <person name="VanderVen B.C."/>
            <person name="Sherman D.R."/>
            <person name="Russell D.G."/>
            <person name="Sampson N.S."/>
        </authorList>
    </citation>
    <scope>FUNCTION</scope>
    <scope>PATHWAY</scope>
    <source>
        <strain>H37Rv</strain>
    </source>
</reference>
<reference key="4">
    <citation type="journal article" date="2018" name="J. Bacteriol.">
        <title>Characterization of an aldolase involved in cholesterol side chain degradation in Mycobacterium tuberculosis.</title>
        <authorList>
            <person name="Gilbert S."/>
            <person name="Hood L."/>
            <person name="Seah S.Y.K."/>
        </authorList>
    </citation>
    <scope>ACTIVITY REGULATION</scope>
    <scope>INTERACTION WITH LTP2</scope>
    <scope>DOMAIN</scope>
</reference>
<reference key="5">
    <citation type="journal article" date="2019" name="Biochemistry">
        <title>Mycobacterium tuberculosis exploits a heterohexameric enoyl-CoA hydratase retro-aldolase complex for cholesterol catabolism.</title>
        <authorList>
            <person name="Yuan T."/>
            <person name="Yang M."/>
            <person name="Gehring K."/>
            <person name="Sampson N.S."/>
        </authorList>
    </citation>
    <scope>FUNCTION</scope>
    <scope>CATALYTIC ACTIVITY</scope>
    <scope>SUBUNIT</scope>
    <scope>SAXS AND EM STUDIES OF THE CHSH1-CHSH2-LTP2 COMPLEX</scope>
    <source>
        <strain>H37Rv</strain>
    </source>
</reference>
<reference evidence="8 9" key="6">
    <citation type="journal article" date="2014" name="ACS Chem. Biol.">
        <title>A distinct MaoC-like enoyl-CoA hydratase architecture mediates cholesterol catabolism in Mycobacterium tuberculosis.</title>
        <authorList>
            <person name="Yang M."/>
            <person name="Guja K.E."/>
            <person name="Thomas S.T."/>
            <person name="Garcia-Diaz M."/>
            <person name="Sampson N.S."/>
        </authorList>
    </citation>
    <scope>X-RAY CRYSTALLOGRAPHY (1.54 ANGSTROMS) OF 1-187 IN COMPLEXES WITH CHSH1 AND SUBSTRATE ANALOG</scope>
    <scope>FUNCTION</scope>
    <scope>CATALYTIC ACTIVITY</scope>
    <scope>PATHWAY</scope>
    <scope>SUBUNIT</scope>
    <scope>DOMAIN</scope>
    <source>
        <strain>H37Rv</strain>
    </source>
</reference>
<proteinExistence type="evidence at protein level"/>